<sequence>MDDLRYGVYPVKGASGYPGAERNLLEYSYFEKGPLTFRDVVIEFSQEEWQCLDTAQQDLYRKVMLENFRNLVFLGIDVSKPDLITCLEQGKDPWNMKRHSMVATPPVTYSHFAQDLWPQPGIKDSFQKVILREYGNYGHKDLQLRKGCKSVNECNVQKEGYNELKEYLTTTQSKIFQCDKYVKVFHKFLNSNTHKTRHTGKKPFKCKKCGKSFCMLLHLGQHKIIHIRENSYQCEECGKAFKWFSTLTRHKRIHTGDKSYKHEECGKGFNHSTTLTRHKVIHAGEKHYKCEKCGKDFKQSSHLTKHKTIHAGEKPYKCEGCGKAFCQFSYLTKHKIIHTGEKPYKCEECGKAFNWYSHLTRHKIIHTGEKPYKCE</sequence>
<protein>
    <recommendedName>
        <fullName evidence="4">Zinc finger protein 738</fullName>
    </recommendedName>
</protein>
<organism>
    <name type="scientific">Homo sapiens</name>
    <name type="common">Human</name>
    <dbReference type="NCBI Taxonomy" id="9606"/>
    <lineage>
        <taxon>Eukaryota</taxon>
        <taxon>Metazoa</taxon>
        <taxon>Chordata</taxon>
        <taxon>Craniata</taxon>
        <taxon>Vertebrata</taxon>
        <taxon>Euteleostomi</taxon>
        <taxon>Mammalia</taxon>
        <taxon>Eutheria</taxon>
        <taxon>Euarchontoglires</taxon>
        <taxon>Primates</taxon>
        <taxon>Haplorrhini</taxon>
        <taxon>Catarrhini</taxon>
        <taxon>Hominidae</taxon>
        <taxon>Homo</taxon>
    </lineage>
</organism>
<comment type="function">
    <text>May be involved in transcriptional regulation.</text>
</comment>
<comment type="subcellular location">
    <subcellularLocation>
        <location evidence="3">Nucleus</location>
    </subcellularLocation>
</comment>
<comment type="alternative products">
    <event type="alternative splicing"/>
    <isoform>
        <id>Q8NE65-1</id>
        <name>1</name>
        <sequence type="displayed"/>
    </isoform>
    <isoform>
        <id>Q8NE65-2</id>
        <name>2</name>
        <sequence type="described" ref="VSP_061287 VSP_061288"/>
    </isoform>
</comment>
<comment type="miscellaneous">
    <molecule>Isoform 1</molecule>
    <text evidence="3">Gene prediction based on partial EST data.</text>
</comment>
<feature type="chain" id="PRO_0000274879" description="Zinc finger protein 738">
    <location>
        <begin position="1"/>
        <end position="375"/>
    </location>
</feature>
<feature type="domain" description="KRAB" evidence="2">
    <location>
        <begin position="35"/>
        <end position="106"/>
    </location>
</feature>
<feature type="zinc finger region" description="C2H2-type 1; degenerate" evidence="1">
    <location>
        <begin position="176"/>
        <end position="198"/>
    </location>
</feature>
<feature type="zinc finger region" description="C2H2-type 2" evidence="1">
    <location>
        <begin position="204"/>
        <end position="226"/>
    </location>
</feature>
<feature type="zinc finger region" description="C2H2-type 3" evidence="1">
    <location>
        <begin position="232"/>
        <end position="254"/>
    </location>
</feature>
<feature type="zinc finger region" description="C2H2-type 4; atypical" evidence="1">
    <location>
        <begin position="260"/>
        <end position="282"/>
    </location>
</feature>
<feature type="zinc finger region" description="C2H2-type 5" evidence="1">
    <location>
        <begin position="288"/>
        <end position="310"/>
    </location>
</feature>
<feature type="zinc finger region" description="C2H2-type 6" evidence="1">
    <location>
        <begin position="316"/>
        <end position="338"/>
    </location>
</feature>
<feature type="zinc finger region" description="C2H2-type 7" evidence="1">
    <location>
        <begin position="344"/>
        <end position="366"/>
    </location>
</feature>
<feature type="splice variant" id="VSP_061287" description="In isoform 2.">
    <original>PVTYSHFAQDLWPQPGIKDSFQKVILREYGNY</original>
    <variation>PESGVLKFPTIIILLSRCFFQSVNICFIYLEP</variation>
    <location>
        <begin position="106"/>
        <end position="137"/>
    </location>
</feature>
<feature type="splice variant" id="VSP_061288" description="In isoform 2.">
    <location>
        <begin position="138"/>
        <end position="375"/>
    </location>
</feature>
<proteinExistence type="evidence at protein level"/>
<name>ZN738_HUMAN</name>
<reference key="1">
    <citation type="journal article" date="2004" name="Nat. Genet.">
        <title>Complete sequencing and characterization of 21,243 full-length human cDNAs.</title>
        <authorList>
            <person name="Ota T."/>
            <person name="Suzuki Y."/>
            <person name="Nishikawa T."/>
            <person name="Otsuki T."/>
            <person name="Sugiyama T."/>
            <person name="Irie R."/>
            <person name="Wakamatsu A."/>
            <person name="Hayashi K."/>
            <person name="Sato H."/>
            <person name="Nagai K."/>
            <person name="Kimura K."/>
            <person name="Makita H."/>
            <person name="Sekine M."/>
            <person name="Obayashi M."/>
            <person name="Nishi T."/>
            <person name="Shibahara T."/>
            <person name="Tanaka T."/>
            <person name="Ishii S."/>
            <person name="Yamamoto J."/>
            <person name="Saito K."/>
            <person name="Kawai Y."/>
            <person name="Isono Y."/>
            <person name="Nakamura Y."/>
            <person name="Nagahari K."/>
            <person name="Murakami K."/>
            <person name="Yasuda T."/>
            <person name="Iwayanagi T."/>
            <person name="Wagatsuma M."/>
            <person name="Shiratori A."/>
            <person name="Sudo H."/>
            <person name="Hosoiri T."/>
            <person name="Kaku Y."/>
            <person name="Kodaira H."/>
            <person name="Kondo H."/>
            <person name="Sugawara M."/>
            <person name="Takahashi M."/>
            <person name="Kanda K."/>
            <person name="Yokoi T."/>
            <person name="Furuya T."/>
            <person name="Kikkawa E."/>
            <person name="Omura Y."/>
            <person name="Abe K."/>
            <person name="Kamihara K."/>
            <person name="Katsuta N."/>
            <person name="Sato K."/>
            <person name="Tanikawa M."/>
            <person name="Yamazaki M."/>
            <person name="Ninomiya K."/>
            <person name="Ishibashi T."/>
            <person name="Yamashita H."/>
            <person name="Murakawa K."/>
            <person name="Fujimori K."/>
            <person name="Tanai H."/>
            <person name="Kimata M."/>
            <person name="Watanabe M."/>
            <person name="Hiraoka S."/>
            <person name="Chiba Y."/>
            <person name="Ishida S."/>
            <person name="Ono Y."/>
            <person name="Takiguchi S."/>
            <person name="Watanabe S."/>
            <person name="Yosida M."/>
            <person name="Hotuta T."/>
            <person name="Kusano J."/>
            <person name="Kanehori K."/>
            <person name="Takahashi-Fujii A."/>
            <person name="Hara H."/>
            <person name="Tanase T.-O."/>
            <person name="Nomura Y."/>
            <person name="Togiya S."/>
            <person name="Komai F."/>
            <person name="Hara R."/>
            <person name="Takeuchi K."/>
            <person name="Arita M."/>
            <person name="Imose N."/>
            <person name="Musashino K."/>
            <person name="Yuuki H."/>
            <person name="Oshima A."/>
            <person name="Sasaki N."/>
            <person name="Aotsuka S."/>
            <person name="Yoshikawa Y."/>
            <person name="Matsunawa H."/>
            <person name="Ichihara T."/>
            <person name="Shiohata N."/>
            <person name="Sano S."/>
            <person name="Moriya S."/>
            <person name="Momiyama H."/>
            <person name="Satoh N."/>
            <person name="Takami S."/>
            <person name="Terashima Y."/>
            <person name="Suzuki O."/>
            <person name="Nakagawa S."/>
            <person name="Senoh A."/>
            <person name="Mizoguchi H."/>
            <person name="Goto Y."/>
            <person name="Shimizu F."/>
            <person name="Wakebe H."/>
            <person name="Hishigaki H."/>
            <person name="Watanabe T."/>
            <person name="Sugiyama A."/>
            <person name="Takemoto M."/>
            <person name="Kawakami B."/>
            <person name="Yamazaki M."/>
            <person name="Watanabe K."/>
            <person name="Kumagai A."/>
            <person name="Itakura S."/>
            <person name="Fukuzumi Y."/>
            <person name="Fujimori Y."/>
            <person name="Komiyama M."/>
            <person name="Tashiro H."/>
            <person name="Tanigami A."/>
            <person name="Fujiwara T."/>
            <person name="Ono T."/>
            <person name="Yamada K."/>
            <person name="Fujii Y."/>
            <person name="Ozaki K."/>
            <person name="Hirao M."/>
            <person name="Ohmori Y."/>
            <person name="Kawabata A."/>
            <person name="Hikiji T."/>
            <person name="Kobatake N."/>
            <person name="Inagaki H."/>
            <person name="Ikema Y."/>
            <person name="Okamoto S."/>
            <person name="Okitani R."/>
            <person name="Kawakami T."/>
            <person name="Noguchi S."/>
            <person name="Itoh T."/>
            <person name="Shigeta K."/>
            <person name="Senba T."/>
            <person name="Matsumura K."/>
            <person name="Nakajima Y."/>
            <person name="Mizuno T."/>
            <person name="Morinaga M."/>
            <person name="Sasaki M."/>
            <person name="Togashi T."/>
            <person name="Oyama M."/>
            <person name="Hata H."/>
            <person name="Watanabe M."/>
            <person name="Komatsu T."/>
            <person name="Mizushima-Sugano J."/>
            <person name="Satoh T."/>
            <person name="Shirai Y."/>
            <person name="Takahashi Y."/>
            <person name="Nakagawa K."/>
            <person name="Okumura K."/>
            <person name="Nagase T."/>
            <person name="Nomura N."/>
            <person name="Kikuchi H."/>
            <person name="Masuho Y."/>
            <person name="Yamashita R."/>
            <person name="Nakai K."/>
            <person name="Yada T."/>
            <person name="Nakamura Y."/>
            <person name="Ohara O."/>
            <person name="Isogai T."/>
            <person name="Sugano S."/>
        </authorList>
    </citation>
    <scope>NUCLEOTIDE SEQUENCE [LARGE SCALE MRNA] (ISOFORM 2)</scope>
</reference>
<reference key="2">
    <citation type="journal article" date="2004" name="Nature">
        <title>The DNA sequence and biology of human chromosome 19.</title>
        <authorList>
            <person name="Grimwood J."/>
            <person name="Gordon L.A."/>
            <person name="Olsen A.S."/>
            <person name="Terry A."/>
            <person name="Schmutz J."/>
            <person name="Lamerdin J.E."/>
            <person name="Hellsten U."/>
            <person name="Goodstein D."/>
            <person name="Couronne O."/>
            <person name="Tran-Gyamfi M."/>
            <person name="Aerts A."/>
            <person name="Altherr M."/>
            <person name="Ashworth L."/>
            <person name="Bajorek E."/>
            <person name="Black S."/>
            <person name="Branscomb E."/>
            <person name="Caenepeel S."/>
            <person name="Carrano A.V."/>
            <person name="Caoile C."/>
            <person name="Chan Y.M."/>
            <person name="Christensen M."/>
            <person name="Cleland C.A."/>
            <person name="Copeland A."/>
            <person name="Dalin E."/>
            <person name="Dehal P."/>
            <person name="Denys M."/>
            <person name="Detter J.C."/>
            <person name="Escobar J."/>
            <person name="Flowers D."/>
            <person name="Fotopulos D."/>
            <person name="Garcia C."/>
            <person name="Georgescu A.M."/>
            <person name="Glavina T."/>
            <person name="Gomez M."/>
            <person name="Gonzales E."/>
            <person name="Groza M."/>
            <person name="Hammon N."/>
            <person name="Hawkins T."/>
            <person name="Haydu L."/>
            <person name="Ho I."/>
            <person name="Huang W."/>
            <person name="Israni S."/>
            <person name="Jett J."/>
            <person name="Kadner K."/>
            <person name="Kimball H."/>
            <person name="Kobayashi A."/>
            <person name="Larionov V."/>
            <person name="Leem S.-H."/>
            <person name="Lopez F."/>
            <person name="Lou Y."/>
            <person name="Lowry S."/>
            <person name="Malfatti S."/>
            <person name="Martinez D."/>
            <person name="McCready P.M."/>
            <person name="Medina C."/>
            <person name="Morgan J."/>
            <person name="Nelson K."/>
            <person name="Nolan M."/>
            <person name="Ovcharenko I."/>
            <person name="Pitluck S."/>
            <person name="Pollard M."/>
            <person name="Popkie A.P."/>
            <person name="Predki P."/>
            <person name="Quan G."/>
            <person name="Ramirez L."/>
            <person name="Rash S."/>
            <person name="Retterer J."/>
            <person name="Rodriguez A."/>
            <person name="Rogers S."/>
            <person name="Salamov A."/>
            <person name="Salazar A."/>
            <person name="She X."/>
            <person name="Smith D."/>
            <person name="Slezak T."/>
            <person name="Solovyev V."/>
            <person name="Thayer N."/>
            <person name="Tice H."/>
            <person name="Tsai M."/>
            <person name="Ustaszewska A."/>
            <person name="Vo N."/>
            <person name="Wagner M."/>
            <person name="Wheeler J."/>
            <person name="Wu K."/>
            <person name="Xie G."/>
            <person name="Yang J."/>
            <person name="Dubchak I."/>
            <person name="Furey T.S."/>
            <person name="DeJong P."/>
            <person name="Dickson M."/>
            <person name="Gordon D."/>
            <person name="Eichler E.E."/>
            <person name="Pennacchio L.A."/>
            <person name="Richardson P."/>
            <person name="Stubbs L."/>
            <person name="Rokhsar D.S."/>
            <person name="Myers R.M."/>
            <person name="Rubin E.M."/>
            <person name="Lucas S.M."/>
        </authorList>
    </citation>
    <scope>NUCLEOTIDE SEQUENCE [LARGE SCALE GENOMIC DNA]</scope>
</reference>
<dbReference type="EMBL" id="AK291002">
    <property type="protein sequence ID" value="BAF83691.1"/>
    <property type="molecule type" value="mRNA"/>
</dbReference>
<dbReference type="EMBL" id="AK291193">
    <property type="protein sequence ID" value="BAF83882.1"/>
    <property type="molecule type" value="mRNA"/>
</dbReference>
<dbReference type="EMBL" id="AC010615">
    <property type="status" value="NOT_ANNOTATED_CDS"/>
    <property type="molecule type" value="Genomic_DNA"/>
</dbReference>
<dbReference type="EMBL" id="AC022432">
    <property type="status" value="NOT_ANNOTATED_CDS"/>
    <property type="molecule type" value="Genomic_DNA"/>
</dbReference>
<dbReference type="CCDS" id="CCDS86732.1">
    <molecule id="Q8NE65-2"/>
</dbReference>
<dbReference type="CCDS" id="CCDS92573.1">
    <molecule id="Q8NE65-1"/>
</dbReference>
<dbReference type="RefSeq" id="NP_001342166.1">
    <molecule id="Q8NE65-1"/>
    <property type="nucleotide sequence ID" value="NM_001355237.2"/>
</dbReference>
<dbReference type="RefSeq" id="NP_001342168.1">
    <molecule id="Q8NE65-2"/>
    <property type="nucleotide sequence ID" value="NM_001355239.2"/>
</dbReference>
<dbReference type="SMR" id="Q8NE65"/>
<dbReference type="FunCoup" id="Q8NE65">
    <property type="interactions" value="41"/>
</dbReference>
<dbReference type="IntAct" id="Q8NE65">
    <property type="interactions" value="4"/>
</dbReference>
<dbReference type="STRING" id="9606.ENSP00000311957"/>
<dbReference type="GlyGen" id="Q8NE65">
    <property type="glycosylation" value="1 site, 1 O-linked glycan (1 site)"/>
</dbReference>
<dbReference type="iPTMnet" id="Q8NE65"/>
<dbReference type="PhosphoSitePlus" id="Q8NE65"/>
<dbReference type="BioMuta" id="ZNF738"/>
<dbReference type="DMDM" id="74730211"/>
<dbReference type="jPOST" id="Q8NE65"/>
<dbReference type="MassIVE" id="Q8NE65"/>
<dbReference type="PaxDb" id="9606-ENSP00000311957"/>
<dbReference type="PeptideAtlas" id="Q8NE65"/>
<dbReference type="ProteomicsDB" id="73129"/>
<dbReference type="Pumba" id="Q8NE65"/>
<dbReference type="Antibodypedia" id="74048">
    <property type="antibodies" value="14 antibodies from 5 providers"/>
</dbReference>
<dbReference type="Ensembl" id="ENST00000311015.7">
    <molecule id="Q8NE65-2"/>
    <property type="protein sequence ID" value="ENSP00000311957.3"/>
    <property type="gene ID" value="ENSG00000172687.14"/>
</dbReference>
<dbReference type="Ensembl" id="ENST00000683779.1">
    <molecule id="Q8NE65-1"/>
    <property type="protein sequence ID" value="ENSP00000507366.1"/>
    <property type="gene ID" value="ENSG00000172687.14"/>
</dbReference>
<dbReference type="GeneID" id="148203"/>
<dbReference type="MANE-Select" id="ENST00000683779.1">
    <property type="protein sequence ID" value="ENSP00000507366.1"/>
    <property type="RefSeq nucleotide sequence ID" value="NM_001355237.2"/>
    <property type="RefSeq protein sequence ID" value="NP_001342166.1"/>
</dbReference>
<dbReference type="UCSC" id="uc002nps.5">
    <molecule id="Q8NE65-1"/>
    <property type="organism name" value="human"/>
</dbReference>
<dbReference type="AGR" id="HGNC:32469"/>
<dbReference type="GeneCards" id="ZNF738"/>
<dbReference type="HGNC" id="HGNC:32469">
    <property type="gene designation" value="ZNF738"/>
</dbReference>
<dbReference type="HPA" id="ENSG00000172687">
    <property type="expression patterns" value="Low tissue specificity"/>
</dbReference>
<dbReference type="neXtProt" id="NX_Q8NE65"/>
<dbReference type="OpenTargets" id="ENSG00000172687"/>
<dbReference type="VEuPathDB" id="HostDB:ENSG00000172687"/>
<dbReference type="eggNOG" id="KOG1721">
    <property type="taxonomic scope" value="Eukaryota"/>
</dbReference>
<dbReference type="GeneTree" id="ENSGT00940000154251"/>
<dbReference type="HOGENOM" id="CLU_166510_0_0_1"/>
<dbReference type="InParanoid" id="Q8NE65"/>
<dbReference type="OrthoDB" id="1095242at2759"/>
<dbReference type="PAN-GO" id="Q8NE65">
    <property type="GO annotations" value="0 GO annotations based on evolutionary models"/>
</dbReference>
<dbReference type="PhylomeDB" id="Q8NE65"/>
<dbReference type="TreeFam" id="TF342644"/>
<dbReference type="PathwayCommons" id="Q8NE65"/>
<dbReference type="Reactome" id="R-HSA-212436">
    <property type="pathway name" value="Generic Transcription Pathway"/>
</dbReference>
<dbReference type="ChiTaRS" id="ZNF738">
    <property type="organism name" value="human"/>
</dbReference>
<dbReference type="Pharos" id="Q8NE65">
    <property type="development level" value="Tdark"/>
</dbReference>
<dbReference type="PRO" id="PR:Q8NE65"/>
<dbReference type="Proteomes" id="UP000005640">
    <property type="component" value="Chromosome 19"/>
</dbReference>
<dbReference type="RNAct" id="Q8NE65">
    <property type="molecule type" value="protein"/>
</dbReference>
<dbReference type="Bgee" id="ENSG00000172687">
    <property type="expression patterns" value="Expressed in oocyte and 166 other cell types or tissues"/>
</dbReference>
<dbReference type="ExpressionAtlas" id="Q8NE65">
    <property type="expression patterns" value="baseline and differential"/>
</dbReference>
<dbReference type="GO" id="GO:0005634">
    <property type="term" value="C:nucleus"/>
    <property type="evidence" value="ECO:0007669"/>
    <property type="project" value="UniProtKB-SubCell"/>
</dbReference>
<dbReference type="GO" id="GO:0003677">
    <property type="term" value="F:DNA binding"/>
    <property type="evidence" value="ECO:0007669"/>
    <property type="project" value="UniProtKB-KW"/>
</dbReference>
<dbReference type="GO" id="GO:0004842">
    <property type="term" value="F:ubiquitin-protein transferase activity"/>
    <property type="evidence" value="ECO:0000250"/>
    <property type="project" value="UniProtKB"/>
</dbReference>
<dbReference type="GO" id="GO:0008270">
    <property type="term" value="F:zinc ion binding"/>
    <property type="evidence" value="ECO:0007669"/>
    <property type="project" value="UniProtKB-KW"/>
</dbReference>
<dbReference type="GO" id="GO:0000209">
    <property type="term" value="P:protein polyubiquitination"/>
    <property type="evidence" value="ECO:0000250"/>
    <property type="project" value="UniProtKB"/>
</dbReference>
<dbReference type="GO" id="GO:0006355">
    <property type="term" value="P:regulation of DNA-templated transcription"/>
    <property type="evidence" value="ECO:0007669"/>
    <property type="project" value="InterPro"/>
</dbReference>
<dbReference type="CDD" id="cd07765">
    <property type="entry name" value="KRAB_A-box"/>
    <property type="match status" value="1"/>
</dbReference>
<dbReference type="FunFam" id="3.30.160.60:FF:001737">
    <property type="entry name" value="Zinc finger protein 100"/>
    <property type="match status" value="1"/>
</dbReference>
<dbReference type="FunFam" id="3.30.160.60:FF:000120">
    <property type="entry name" value="Zinc finger protein 430"/>
    <property type="match status" value="1"/>
</dbReference>
<dbReference type="FunFam" id="3.30.160.60:FF:002448">
    <property type="entry name" value="Zinc finger protein 430"/>
    <property type="match status" value="1"/>
</dbReference>
<dbReference type="FunFam" id="3.30.160.60:FF:000362">
    <property type="entry name" value="Zinc finger protein 606"/>
    <property type="match status" value="1"/>
</dbReference>
<dbReference type="FunFam" id="3.30.160.60:FF:000307">
    <property type="entry name" value="Zinc finger protein ZFP69 isoform 1"/>
    <property type="match status" value="2"/>
</dbReference>
<dbReference type="Gene3D" id="6.10.140.140">
    <property type="match status" value="1"/>
</dbReference>
<dbReference type="Gene3D" id="3.30.160.60">
    <property type="entry name" value="Classic Zinc Finger"/>
    <property type="match status" value="6"/>
</dbReference>
<dbReference type="InterPro" id="IPR050752">
    <property type="entry name" value="C2H2-ZF_domain"/>
</dbReference>
<dbReference type="InterPro" id="IPR001909">
    <property type="entry name" value="KRAB"/>
</dbReference>
<dbReference type="InterPro" id="IPR036051">
    <property type="entry name" value="KRAB_dom_sf"/>
</dbReference>
<dbReference type="InterPro" id="IPR036236">
    <property type="entry name" value="Znf_C2H2_sf"/>
</dbReference>
<dbReference type="InterPro" id="IPR013087">
    <property type="entry name" value="Znf_C2H2_type"/>
</dbReference>
<dbReference type="PANTHER" id="PTHR24384">
    <property type="entry name" value="FINGER PUTATIVE TRANSCRIPTION FACTOR FAMILY-RELATED"/>
    <property type="match status" value="1"/>
</dbReference>
<dbReference type="PANTHER" id="PTHR24384:SF131">
    <property type="entry name" value="ZINC FINGER PROTEIN 430"/>
    <property type="match status" value="1"/>
</dbReference>
<dbReference type="Pfam" id="PF01352">
    <property type="entry name" value="KRAB"/>
    <property type="match status" value="1"/>
</dbReference>
<dbReference type="Pfam" id="PF00096">
    <property type="entry name" value="zf-C2H2"/>
    <property type="match status" value="4"/>
</dbReference>
<dbReference type="SMART" id="SM00349">
    <property type="entry name" value="KRAB"/>
    <property type="match status" value="1"/>
</dbReference>
<dbReference type="SMART" id="SM00355">
    <property type="entry name" value="ZnF_C2H2"/>
    <property type="match status" value="6"/>
</dbReference>
<dbReference type="SUPFAM" id="SSF57667">
    <property type="entry name" value="beta-beta-alpha zinc fingers"/>
    <property type="match status" value="4"/>
</dbReference>
<dbReference type="SUPFAM" id="SSF109640">
    <property type="entry name" value="KRAB domain (Kruppel-associated box)"/>
    <property type="match status" value="1"/>
</dbReference>
<dbReference type="PROSITE" id="PS50805">
    <property type="entry name" value="KRAB"/>
    <property type="match status" value="1"/>
</dbReference>
<dbReference type="PROSITE" id="PS00028">
    <property type="entry name" value="ZINC_FINGER_C2H2_1"/>
    <property type="match status" value="5"/>
</dbReference>
<dbReference type="PROSITE" id="PS50157">
    <property type="entry name" value="ZINC_FINGER_C2H2_2"/>
    <property type="match status" value="7"/>
</dbReference>
<accession>Q8NE65</accession>
<accession>A8K4N7</accession>
<gene>
    <name evidence="4" type="primary">ZNF738</name>
</gene>
<keyword id="KW-0025">Alternative splicing</keyword>
<keyword id="KW-0238">DNA-binding</keyword>
<keyword id="KW-0479">Metal-binding</keyword>
<keyword id="KW-0539">Nucleus</keyword>
<keyword id="KW-1267">Proteomics identification</keyword>
<keyword id="KW-1185">Reference proteome</keyword>
<keyword id="KW-0677">Repeat</keyword>
<keyword id="KW-0804">Transcription</keyword>
<keyword id="KW-0805">Transcription regulation</keyword>
<keyword id="KW-0862">Zinc</keyword>
<keyword id="KW-0863">Zinc-finger</keyword>
<evidence type="ECO:0000255" key="1">
    <source>
        <dbReference type="PROSITE-ProRule" id="PRU00042"/>
    </source>
</evidence>
<evidence type="ECO:0000255" key="2">
    <source>
        <dbReference type="PROSITE-ProRule" id="PRU00119"/>
    </source>
</evidence>
<evidence type="ECO:0000305" key="3"/>
<evidence type="ECO:0000312" key="4">
    <source>
        <dbReference type="HGNC" id="HGNC:32469"/>
    </source>
</evidence>